<proteinExistence type="inferred from homology"/>
<sequence length="124" mass="12783">MTIDEMMSAIKGMTVIELSELVKALEKEFGVSAAVAVAAPAAGGAAVAAAAEEEKTEFNVILKDVGANKINVIKAVRELTSLGLKEAKDMVEAAPKAVKENVSKEEADAAKKALEAAGATIEIK</sequence>
<keyword id="KW-0687">Ribonucleoprotein</keyword>
<keyword id="KW-0689">Ribosomal protein</keyword>
<gene>
    <name evidence="1" type="primary">rplL</name>
    <name type="ordered locus">DET0990</name>
</gene>
<organism>
    <name type="scientific">Dehalococcoides mccartyi (strain ATCC BAA-2266 / KCTC 15142 / 195)</name>
    <name type="common">Dehalococcoides ethenogenes (strain 195)</name>
    <dbReference type="NCBI Taxonomy" id="243164"/>
    <lineage>
        <taxon>Bacteria</taxon>
        <taxon>Bacillati</taxon>
        <taxon>Chloroflexota</taxon>
        <taxon>Dehalococcoidia</taxon>
        <taxon>Dehalococcoidales</taxon>
        <taxon>Dehalococcoidaceae</taxon>
        <taxon>Dehalococcoides</taxon>
    </lineage>
</organism>
<protein>
    <recommendedName>
        <fullName evidence="1">Large ribosomal subunit protein bL12</fullName>
    </recommendedName>
    <alternativeName>
        <fullName evidence="2">50S ribosomal protein L7/L12</fullName>
    </alternativeName>
</protein>
<evidence type="ECO:0000255" key="1">
    <source>
        <dbReference type="HAMAP-Rule" id="MF_00368"/>
    </source>
</evidence>
<evidence type="ECO:0000305" key="2"/>
<comment type="function">
    <text evidence="1">Forms part of the ribosomal stalk which helps the ribosome interact with GTP-bound translation factors. Is thus essential for accurate translation.</text>
</comment>
<comment type="subunit">
    <text evidence="1">Homodimer. Part of the ribosomal stalk of the 50S ribosomal subunit. Forms a multimeric L10(L12)X complex, where L10 forms an elongated spine to which 2 to 4 L12 dimers bind in a sequential fashion. Binds GTP-bound translation factors.</text>
</comment>
<comment type="similarity">
    <text evidence="1">Belongs to the bacterial ribosomal protein bL12 family.</text>
</comment>
<feature type="chain" id="PRO_0000243416" description="Large ribosomal subunit protein bL12">
    <location>
        <begin position="1"/>
        <end position="124"/>
    </location>
</feature>
<reference key="1">
    <citation type="journal article" date="2005" name="Science">
        <title>Genome sequence of the PCE-dechlorinating bacterium Dehalococcoides ethenogenes.</title>
        <authorList>
            <person name="Seshadri R."/>
            <person name="Adrian L."/>
            <person name="Fouts D.E."/>
            <person name="Eisen J.A."/>
            <person name="Phillippy A.M."/>
            <person name="Methe B.A."/>
            <person name="Ward N.L."/>
            <person name="Nelson W.C."/>
            <person name="DeBoy R.T."/>
            <person name="Khouri H.M."/>
            <person name="Kolonay J.F."/>
            <person name="Dodson R.J."/>
            <person name="Daugherty S.C."/>
            <person name="Brinkac L.M."/>
            <person name="Sullivan S.A."/>
            <person name="Madupu R."/>
            <person name="Nelson K.E."/>
            <person name="Kang K.H."/>
            <person name="Impraim M."/>
            <person name="Tran K."/>
            <person name="Robinson J.M."/>
            <person name="Forberger H.A."/>
            <person name="Fraser C.M."/>
            <person name="Zinder S.H."/>
            <person name="Heidelberg J.F."/>
        </authorList>
    </citation>
    <scope>NUCLEOTIDE SEQUENCE [LARGE SCALE GENOMIC DNA]</scope>
    <source>
        <strain>ATCC BAA-2266 / KCTC 15142 / 195</strain>
    </source>
</reference>
<name>RL7_DEHM1</name>
<accession>Q3Z7T6</accession>
<dbReference type="EMBL" id="CP000027">
    <property type="protein sequence ID" value="AAW39784.1"/>
    <property type="molecule type" value="Genomic_DNA"/>
</dbReference>
<dbReference type="RefSeq" id="WP_010936692.1">
    <property type="nucleotide sequence ID" value="NC_002936.3"/>
</dbReference>
<dbReference type="SMR" id="Q3Z7T6"/>
<dbReference type="FunCoup" id="Q3Z7T6">
    <property type="interactions" value="335"/>
</dbReference>
<dbReference type="STRING" id="243164.DET0990"/>
<dbReference type="GeneID" id="3229746"/>
<dbReference type="KEGG" id="det:DET0990"/>
<dbReference type="PATRIC" id="fig|243164.10.peg.939"/>
<dbReference type="eggNOG" id="COG0222">
    <property type="taxonomic scope" value="Bacteria"/>
</dbReference>
<dbReference type="HOGENOM" id="CLU_086499_3_2_0"/>
<dbReference type="InParanoid" id="Q3Z7T6"/>
<dbReference type="Proteomes" id="UP000008289">
    <property type="component" value="Chromosome"/>
</dbReference>
<dbReference type="GO" id="GO:0022625">
    <property type="term" value="C:cytosolic large ribosomal subunit"/>
    <property type="evidence" value="ECO:0007669"/>
    <property type="project" value="TreeGrafter"/>
</dbReference>
<dbReference type="GO" id="GO:0003729">
    <property type="term" value="F:mRNA binding"/>
    <property type="evidence" value="ECO:0007669"/>
    <property type="project" value="TreeGrafter"/>
</dbReference>
<dbReference type="GO" id="GO:0003735">
    <property type="term" value="F:structural constituent of ribosome"/>
    <property type="evidence" value="ECO:0007669"/>
    <property type="project" value="InterPro"/>
</dbReference>
<dbReference type="GO" id="GO:0006412">
    <property type="term" value="P:translation"/>
    <property type="evidence" value="ECO:0007669"/>
    <property type="project" value="UniProtKB-UniRule"/>
</dbReference>
<dbReference type="CDD" id="cd00387">
    <property type="entry name" value="Ribosomal_L7_L12"/>
    <property type="match status" value="1"/>
</dbReference>
<dbReference type="FunFam" id="3.30.1390.10:FF:000001">
    <property type="entry name" value="50S ribosomal protein L7/L12"/>
    <property type="match status" value="1"/>
</dbReference>
<dbReference type="Gene3D" id="3.30.1390.10">
    <property type="match status" value="1"/>
</dbReference>
<dbReference type="Gene3D" id="1.20.5.710">
    <property type="entry name" value="Single helix bin"/>
    <property type="match status" value="1"/>
</dbReference>
<dbReference type="HAMAP" id="MF_00368">
    <property type="entry name" value="Ribosomal_bL12"/>
    <property type="match status" value="1"/>
</dbReference>
<dbReference type="InterPro" id="IPR000206">
    <property type="entry name" value="Ribosomal_bL12"/>
</dbReference>
<dbReference type="InterPro" id="IPR013823">
    <property type="entry name" value="Ribosomal_bL12_C"/>
</dbReference>
<dbReference type="InterPro" id="IPR014719">
    <property type="entry name" value="Ribosomal_bL12_C/ClpS-like"/>
</dbReference>
<dbReference type="InterPro" id="IPR008932">
    <property type="entry name" value="Ribosomal_bL12_oligo"/>
</dbReference>
<dbReference type="InterPro" id="IPR036235">
    <property type="entry name" value="Ribosomal_bL12_oligo_N_sf"/>
</dbReference>
<dbReference type="NCBIfam" id="TIGR00855">
    <property type="entry name" value="L12"/>
    <property type="match status" value="1"/>
</dbReference>
<dbReference type="PANTHER" id="PTHR45987">
    <property type="entry name" value="39S RIBOSOMAL PROTEIN L12"/>
    <property type="match status" value="1"/>
</dbReference>
<dbReference type="PANTHER" id="PTHR45987:SF4">
    <property type="entry name" value="LARGE RIBOSOMAL SUBUNIT PROTEIN BL12M"/>
    <property type="match status" value="1"/>
</dbReference>
<dbReference type="Pfam" id="PF00542">
    <property type="entry name" value="Ribosomal_L12"/>
    <property type="match status" value="1"/>
</dbReference>
<dbReference type="Pfam" id="PF16320">
    <property type="entry name" value="Ribosomal_L12_N"/>
    <property type="match status" value="1"/>
</dbReference>
<dbReference type="SUPFAM" id="SSF54736">
    <property type="entry name" value="ClpS-like"/>
    <property type="match status" value="1"/>
</dbReference>
<dbReference type="SUPFAM" id="SSF48300">
    <property type="entry name" value="Ribosomal protein L7/12, oligomerisation (N-terminal) domain"/>
    <property type="match status" value="1"/>
</dbReference>